<proteinExistence type="evidence at transcript level"/>
<gene>
    <name type="primary">ARPC2</name>
</gene>
<keyword id="KW-0007">Acetylation</keyword>
<keyword id="KW-0009">Actin-binding</keyword>
<keyword id="KW-0966">Cell projection</keyword>
<keyword id="KW-0963">Cytoplasm</keyword>
<keyword id="KW-0206">Cytoskeleton</keyword>
<keyword id="KW-0539">Nucleus</keyword>
<keyword id="KW-1185">Reference proteome</keyword>
<keyword id="KW-0770">Synapse</keyword>
<keyword id="KW-0771">Synaptosome</keyword>
<reference key="1">
    <citation type="submission" date="2004-11" db="EMBL/GenBank/DDBJ databases">
        <authorList>
            <consortium name="The German cDNA consortium"/>
        </authorList>
    </citation>
    <scope>NUCLEOTIDE SEQUENCE [LARGE SCALE MRNA]</scope>
    <source>
        <tissue>Brain cortex</tissue>
    </source>
</reference>
<comment type="function">
    <text evidence="1">Actin-binding component of the Arp2/3 complex, a multiprotein complex that mediates actin polymerization upon stimulation by nucleation-promoting factor (NPF). The Arp2/3 complex mediates the formation of branched actin networks in the cytoplasm, providing the force for cell motility. Seems to contact the mother actin filament. In addition to its role in the cytoplasmic cytoskeleton, the Arp2/3 complex also promotes actin polymerization in the nucleus, thereby regulating gene transcription and repair of damaged DNA. The Arp2/3 complex promotes homologous recombination (HR) repair in response to DNA damage by promoting nuclear actin polymerization, leading to drive motility of double-strand breaks (DSBs).</text>
</comment>
<comment type="subunit">
    <text evidence="1 2 3">Component of the Arp2/3 complex composed of ACTR2/ARP2, ACTR3/ARP3, ARPC1B/p41-ARC, ARPC2/p34-ARC, ARPC3/p21-ARC, ARPC4/p20-ARC and ARPC5/p16-ARC (By similarity). Interacts with SHANK3; the interaction probably mediates the association of SHANK3 with the Arp2/3 complex (By similarity). Interacts with DNAI3; this interaction reduces binding of the Arp2/3 complex to the VCA domain of nucleation promoting factors (By similarity).</text>
</comment>
<comment type="subcellular location">
    <subcellularLocation>
        <location evidence="1">Cytoplasm</location>
        <location evidence="1">Cytoskeleton</location>
    </subcellularLocation>
    <subcellularLocation>
        <location evidence="1">Cell projection</location>
    </subcellularLocation>
    <subcellularLocation>
        <location evidence="3">Synapse</location>
        <location evidence="3">Synaptosome</location>
    </subcellularLocation>
    <subcellularLocation>
        <location evidence="1">Nucleus</location>
    </subcellularLocation>
</comment>
<comment type="similarity">
    <text evidence="4">Belongs to the ARPC2 family.</text>
</comment>
<protein>
    <recommendedName>
        <fullName>Actin-related protein 2/3 complex subunit 2</fullName>
    </recommendedName>
    <alternativeName>
        <fullName>Arp2/3 complex 34 kDa subunit</fullName>
        <shortName>p34-ARC</shortName>
    </alternativeName>
</protein>
<dbReference type="EMBL" id="CR860705">
    <property type="protein sequence ID" value="CAH92821.1"/>
    <property type="molecule type" value="mRNA"/>
</dbReference>
<dbReference type="RefSeq" id="NP_001126648.1">
    <property type="nucleotide sequence ID" value="NM_001133176.1"/>
</dbReference>
<dbReference type="SMR" id="Q5R5Z5"/>
<dbReference type="FunCoup" id="Q5R5Z5">
    <property type="interactions" value="2902"/>
</dbReference>
<dbReference type="STRING" id="9601.ENSPPYP00000014708"/>
<dbReference type="Ensembl" id="ENSPPYT00000062282.1">
    <property type="protein sequence ID" value="ENSPPYP00000041735.1"/>
    <property type="gene ID" value="ENSPPYG00000013164.3"/>
</dbReference>
<dbReference type="GeneID" id="100173646"/>
<dbReference type="KEGG" id="pon:100173646"/>
<dbReference type="CTD" id="10109"/>
<dbReference type="eggNOG" id="KOG2826">
    <property type="taxonomic scope" value="Eukaryota"/>
</dbReference>
<dbReference type="GeneTree" id="ENSGT00390000016794"/>
<dbReference type="HOGENOM" id="CLU_059439_2_0_1"/>
<dbReference type="InParanoid" id="Q5R5Z5"/>
<dbReference type="OMA" id="FRSYFHY"/>
<dbReference type="OrthoDB" id="148331at2759"/>
<dbReference type="TreeFam" id="TF315006"/>
<dbReference type="Proteomes" id="UP000001595">
    <property type="component" value="Chromosome 2B"/>
</dbReference>
<dbReference type="GO" id="GO:0005885">
    <property type="term" value="C:Arp2/3 protein complex"/>
    <property type="evidence" value="ECO:0000250"/>
    <property type="project" value="UniProtKB"/>
</dbReference>
<dbReference type="GO" id="GO:0005768">
    <property type="term" value="C:endosome"/>
    <property type="evidence" value="ECO:0007669"/>
    <property type="project" value="Ensembl"/>
</dbReference>
<dbReference type="GO" id="GO:0005925">
    <property type="term" value="C:focal adhesion"/>
    <property type="evidence" value="ECO:0007669"/>
    <property type="project" value="Ensembl"/>
</dbReference>
<dbReference type="GO" id="GO:0098978">
    <property type="term" value="C:glutamatergic synapse"/>
    <property type="evidence" value="ECO:0007669"/>
    <property type="project" value="Ensembl"/>
</dbReference>
<dbReference type="GO" id="GO:0030027">
    <property type="term" value="C:lamellipodium"/>
    <property type="evidence" value="ECO:0007669"/>
    <property type="project" value="Ensembl"/>
</dbReference>
<dbReference type="GO" id="GO:0036195">
    <property type="term" value="C:muscle cell projection membrane"/>
    <property type="evidence" value="ECO:0007669"/>
    <property type="project" value="Ensembl"/>
</dbReference>
<dbReference type="GO" id="GO:0043005">
    <property type="term" value="C:neuron projection"/>
    <property type="evidence" value="ECO:0007669"/>
    <property type="project" value="UniProtKB-KW"/>
</dbReference>
<dbReference type="GO" id="GO:0005654">
    <property type="term" value="C:nucleoplasm"/>
    <property type="evidence" value="ECO:0007669"/>
    <property type="project" value="Ensembl"/>
</dbReference>
<dbReference type="GO" id="GO:0005634">
    <property type="term" value="C:nucleus"/>
    <property type="evidence" value="ECO:0000250"/>
    <property type="project" value="UniProtKB"/>
</dbReference>
<dbReference type="GO" id="GO:0098794">
    <property type="term" value="C:postsynapse"/>
    <property type="evidence" value="ECO:0007669"/>
    <property type="project" value="Ensembl"/>
</dbReference>
<dbReference type="GO" id="GO:0035861">
    <property type="term" value="C:site of double-strand break"/>
    <property type="evidence" value="ECO:0000250"/>
    <property type="project" value="UniProtKB"/>
</dbReference>
<dbReference type="GO" id="GO:0030672">
    <property type="term" value="C:synaptic vesicle membrane"/>
    <property type="evidence" value="ECO:0007669"/>
    <property type="project" value="Ensembl"/>
</dbReference>
<dbReference type="GO" id="GO:0051015">
    <property type="term" value="F:actin filament binding"/>
    <property type="evidence" value="ECO:0007669"/>
    <property type="project" value="Ensembl"/>
</dbReference>
<dbReference type="GO" id="GO:0005200">
    <property type="term" value="F:structural constituent of cytoskeleton"/>
    <property type="evidence" value="ECO:0007669"/>
    <property type="project" value="Ensembl"/>
</dbReference>
<dbReference type="GO" id="GO:0030041">
    <property type="term" value="P:actin filament polymerization"/>
    <property type="evidence" value="ECO:0007669"/>
    <property type="project" value="InterPro"/>
</dbReference>
<dbReference type="GO" id="GO:0034314">
    <property type="term" value="P:Arp2/3 complex-mediated actin nucleation"/>
    <property type="evidence" value="ECO:0007669"/>
    <property type="project" value="Ensembl"/>
</dbReference>
<dbReference type="GO" id="GO:0030838">
    <property type="term" value="P:positive regulation of actin filament polymerization"/>
    <property type="evidence" value="ECO:0007669"/>
    <property type="project" value="Ensembl"/>
</dbReference>
<dbReference type="GO" id="GO:0010592">
    <property type="term" value="P:positive regulation of lamellipodium assembly"/>
    <property type="evidence" value="ECO:0007669"/>
    <property type="project" value="Ensembl"/>
</dbReference>
<dbReference type="GO" id="GO:1900026">
    <property type="term" value="P:positive regulation of substrate adhesion-dependent cell spreading"/>
    <property type="evidence" value="ECO:0007669"/>
    <property type="project" value="Ensembl"/>
</dbReference>
<dbReference type="FunFam" id="3.30.1460.20:FF:000002">
    <property type="entry name" value="Arp2/3 complex 34 kDa subunit"/>
    <property type="match status" value="1"/>
</dbReference>
<dbReference type="FunFam" id="3.30.1460.20:FF:000004">
    <property type="entry name" value="Arp2/3 complex 34 kDa subunit"/>
    <property type="match status" value="1"/>
</dbReference>
<dbReference type="Gene3D" id="3.30.1460.20">
    <property type="match status" value="2"/>
</dbReference>
<dbReference type="InterPro" id="IPR007188">
    <property type="entry name" value="ARPC2"/>
</dbReference>
<dbReference type="InterPro" id="IPR034666">
    <property type="entry name" value="ARPC2/4"/>
</dbReference>
<dbReference type="PANTHER" id="PTHR12058:SF0">
    <property type="entry name" value="ACTIN-RELATED PROTEIN 2_3 COMPLEX SUBUNIT 2"/>
    <property type="match status" value="1"/>
</dbReference>
<dbReference type="PANTHER" id="PTHR12058">
    <property type="entry name" value="ARP2/3 COMPLEX 34 KDA SUBUNIT"/>
    <property type="match status" value="1"/>
</dbReference>
<dbReference type="Pfam" id="PF04045">
    <property type="entry name" value="P34-Arc"/>
    <property type="match status" value="1"/>
</dbReference>
<dbReference type="SUPFAM" id="SSF69645">
    <property type="entry name" value="Arp2/3 complex subunits"/>
    <property type="match status" value="2"/>
</dbReference>
<organism>
    <name type="scientific">Pongo abelii</name>
    <name type="common">Sumatran orangutan</name>
    <name type="synonym">Pongo pygmaeus abelii</name>
    <dbReference type="NCBI Taxonomy" id="9601"/>
    <lineage>
        <taxon>Eukaryota</taxon>
        <taxon>Metazoa</taxon>
        <taxon>Chordata</taxon>
        <taxon>Craniata</taxon>
        <taxon>Vertebrata</taxon>
        <taxon>Euteleostomi</taxon>
        <taxon>Mammalia</taxon>
        <taxon>Eutheria</taxon>
        <taxon>Euarchontoglires</taxon>
        <taxon>Primates</taxon>
        <taxon>Haplorrhini</taxon>
        <taxon>Catarrhini</taxon>
        <taxon>Hominidae</taxon>
        <taxon>Pongo</taxon>
    </lineage>
</organism>
<sequence length="300" mass="34333">MILLEVNNRIIEETLALKFENAAAGNKPEAVEVTFADFDGVLYHISNPNGDKTKVMVSISLKFYKELQAHGADELLKRVYGSFLVNPESGYNVSLLYDLENLPASKDSIVHQAGMLKRNCFASVFEKYFQFQEEGKEGENRAVIHYRDDETMYVESKKDRVTVVFSTVFKDDDDVVIGKVFMQEFKEGRRASHTAPQVLFSHREPPLELKDTDAAVGDNIGYITFVLFPRHTNASARDNTINLIHTFRDYLHYHIKCSKAYIHTRMRAKTSDFLKVLNRARPDAEKKEMKTITGKTFSSR</sequence>
<name>ARPC2_PONAB</name>
<evidence type="ECO:0000250" key="1">
    <source>
        <dbReference type="UniProtKB" id="O15144"/>
    </source>
</evidence>
<evidence type="ECO:0000250" key="2">
    <source>
        <dbReference type="UniProtKB" id="P61160"/>
    </source>
</evidence>
<evidence type="ECO:0000250" key="3">
    <source>
        <dbReference type="UniProtKB" id="Q9CVB6"/>
    </source>
</evidence>
<evidence type="ECO:0000305" key="4"/>
<accession>Q5R5Z5</accession>
<feature type="chain" id="PRO_0000124035" description="Actin-related protein 2/3 complex subunit 2">
    <location>
        <begin position="1"/>
        <end position="300"/>
    </location>
</feature>
<feature type="modified residue" description="N6-acetyllysine" evidence="1">
    <location>
        <position position="275"/>
    </location>
</feature>
<feature type="modified residue" description="N6-acetyllysine" evidence="1">
    <location>
        <position position="295"/>
    </location>
</feature>